<name>DNLJ_NITV9</name>
<keyword id="KW-0227">DNA damage</keyword>
<keyword id="KW-0234">DNA repair</keyword>
<keyword id="KW-0235">DNA replication</keyword>
<keyword id="KW-0436">Ligase</keyword>
<keyword id="KW-0460">Magnesium</keyword>
<keyword id="KW-0464">Manganese</keyword>
<keyword id="KW-0479">Metal-binding</keyword>
<keyword id="KW-0520">NAD</keyword>
<keyword id="KW-0862">Zinc</keyword>
<sequence>MSISDDISPVPPAPVSEPNAGQDAGQDAAPAHMAARAEALRDQLNYHSHRYYVLDDAEISDAEYDALFRELQDIEAEWPSLRTPDSPTHRVGDTVVAALETQAHTLRMYSLDNAFSAEEWDGFIQRMLRAEPDAPTAFWCDPKMDGLALEVIYENGVFTTALTRGDGEKGEIVTTAMRTVRNLPLRLHGEGPHPARLEVRGEVVITRAEFDALNAARRGAGEKLFANPRNAAAGSVRQLDASVTAGRPLRFLAYGVGQVVWPAETSDGAASAAQGPEARWATHGQVMAALADYGFGTPPDARRCETPAQVMAYYEDLGRRRSELPFDIDGVVAKLDDLSAQAALGYTARAPRWAIALKFPAHQATTRLEHIAIQVGRTGVLTPVAELAPVAVGGVTVSRATLHNEDEIRAKDLRVGDMVVVQRAGDVIPEVVRPLVDQRPASGLPEFEFPAECPVCHTPVRREPGEAAWRCVNVGCPAVVRQSIIHFVSKAGLDIQGVGRRWVELLVDRGKVTSPADLFGLDKQTLLAFERMGPKLAENFIAAFDTARTGATLNRLICALGIRHVGEQTARTLAAHFADLDALGAAQAETLQQLPDIGPEVAASIRAFFANEGNRALLERLRGVGLWPVRPVRPEADAAGAPGEGSGPLAGLRVLFTGSLTTLTRSDAERRAVAAGANILGSVSKKLDLLVVGDKPGSKLDKATKLGIRVLREQEFLDLLEGRGGDVPEDGDGAPGNEDEAPEVSADVPAAPEVLADAPAAISADASSGVAPGVSGGPDRADMTDRTVRTDSVDAPAMPRKKDQHSLL</sequence>
<feature type="chain" id="PRO_0000380366" description="DNA ligase">
    <location>
        <begin position="1"/>
        <end position="808"/>
    </location>
</feature>
<feature type="domain" description="BRCT" evidence="1">
    <location>
        <begin position="644"/>
        <end position="733"/>
    </location>
</feature>
<feature type="region of interest" description="Disordered" evidence="2">
    <location>
        <begin position="1"/>
        <end position="30"/>
    </location>
</feature>
<feature type="region of interest" description="Disordered" evidence="2">
    <location>
        <begin position="720"/>
        <end position="808"/>
    </location>
</feature>
<feature type="compositionally biased region" description="Low complexity" evidence="2">
    <location>
        <begin position="18"/>
        <end position="30"/>
    </location>
</feature>
<feature type="compositionally biased region" description="Acidic residues" evidence="2">
    <location>
        <begin position="727"/>
        <end position="742"/>
    </location>
</feature>
<feature type="compositionally biased region" description="Low complexity" evidence="2">
    <location>
        <begin position="746"/>
        <end position="773"/>
    </location>
</feature>
<feature type="compositionally biased region" description="Basic and acidic residues" evidence="2">
    <location>
        <begin position="779"/>
        <end position="792"/>
    </location>
</feature>
<feature type="active site" description="N6-AMP-lysine intermediate" evidence="1">
    <location>
        <position position="143"/>
    </location>
</feature>
<feature type="binding site" evidence="1">
    <location>
        <begin position="61"/>
        <end position="65"/>
    </location>
    <ligand>
        <name>NAD(+)</name>
        <dbReference type="ChEBI" id="CHEBI:57540"/>
    </ligand>
</feature>
<feature type="binding site" evidence="1">
    <location>
        <begin position="110"/>
        <end position="111"/>
    </location>
    <ligand>
        <name>NAD(+)</name>
        <dbReference type="ChEBI" id="CHEBI:57540"/>
    </ligand>
</feature>
<feature type="binding site" evidence="1">
    <location>
        <position position="141"/>
    </location>
    <ligand>
        <name>NAD(+)</name>
        <dbReference type="ChEBI" id="CHEBI:57540"/>
    </ligand>
</feature>
<feature type="binding site" evidence="1">
    <location>
        <position position="164"/>
    </location>
    <ligand>
        <name>NAD(+)</name>
        <dbReference type="ChEBI" id="CHEBI:57540"/>
    </ligand>
</feature>
<feature type="binding site" evidence="1">
    <location>
        <position position="202"/>
    </location>
    <ligand>
        <name>NAD(+)</name>
        <dbReference type="ChEBI" id="CHEBI:57540"/>
    </ligand>
</feature>
<feature type="binding site" evidence="1">
    <location>
        <position position="334"/>
    </location>
    <ligand>
        <name>NAD(+)</name>
        <dbReference type="ChEBI" id="CHEBI:57540"/>
    </ligand>
</feature>
<feature type="binding site" evidence="1">
    <location>
        <position position="358"/>
    </location>
    <ligand>
        <name>NAD(+)</name>
        <dbReference type="ChEBI" id="CHEBI:57540"/>
    </ligand>
</feature>
<feature type="binding site" evidence="1">
    <location>
        <position position="453"/>
    </location>
    <ligand>
        <name>Zn(2+)</name>
        <dbReference type="ChEBI" id="CHEBI:29105"/>
    </ligand>
</feature>
<feature type="binding site" evidence="1">
    <location>
        <position position="456"/>
    </location>
    <ligand>
        <name>Zn(2+)</name>
        <dbReference type="ChEBI" id="CHEBI:29105"/>
    </ligand>
</feature>
<feature type="binding site" evidence="1">
    <location>
        <position position="471"/>
    </location>
    <ligand>
        <name>Zn(2+)</name>
        <dbReference type="ChEBI" id="CHEBI:29105"/>
    </ligand>
</feature>
<feature type="binding site" evidence="1">
    <location>
        <position position="476"/>
    </location>
    <ligand>
        <name>Zn(2+)</name>
        <dbReference type="ChEBI" id="CHEBI:29105"/>
    </ligand>
</feature>
<comment type="function">
    <text evidence="1">DNA ligase that catalyzes the formation of phosphodiester linkages between 5'-phosphoryl and 3'-hydroxyl groups in double-stranded DNA using NAD as a coenzyme and as the energy source for the reaction. It is essential for DNA replication and repair of damaged DNA.</text>
</comment>
<comment type="catalytic activity">
    <reaction evidence="1">
        <text>NAD(+) + (deoxyribonucleotide)n-3'-hydroxyl + 5'-phospho-(deoxyribonucleotide)m = (deoxyribonucleotide)n+m + AMP + beta-nicotinamide D-nucleotide.</text>
        <dbReference type="EC" id="6.5.1.2"/>
    </reaction>
</comment>
<comment type="cofactor">
    <cofactor evidence="1">
        <name>Mg(2+)</name>
        <dbReference type="ChEBI" id="CHEBI:18420"/>
    </cofactor>
    <cofactor evidence="1">
        <name>Mn(2+)</name>
        <dbReference type="ChEBI" id="CHEBI:29035"/>
    </cofactor>
</comment>
<comment type="similarity">
    <text evidence="1">Belongs to the NAD-dependent DNA ligase family. LigA subfamily.</text>
</comment>
<accession>B8DJT6</accession>
<organism>
    <name type="scientific">Nitratidesulfovibrio vulgaris (strain DSM 19637 / Miyazaki F)</name>
    <name type="common">Desulfovibrio vulgaris</name>
    <dbReference type="NCBI Taxonomy" id="883"/>
    <lineage>
        <taxon>Bacteria</taxon>
        <taxon>Pseudomonadati</taxon>
        <taxon>Thermodesulfobacteriota</taxon>
        <taxon>Desulfovibrionia</taxon>
        <taxon>Desulfovibrionales</taxon>
        <taxon>Desulfovibrionaceae</taxon>
        <taxon>Nitratidesulfovibrio</taxon>
    </lineage>
</organism>
<reference key="1">
    <citation type="submission" date="2008-10" db="EMBL/GenBank/DDBJ databases">
        <title>Complete sequence of Desulfovibrio vulgaris str. 'Miyazaki F'.</title>
        <authorList>
            <person name="Lucas S."/>
            <person name="Copeland A."/>
            <person name="Lapidus A."/>
            <person name="Glavina del Rio T."/>
            <person name="Dalin E."/>
            <person name="Tice H."/>
            <person name="Bruce D."/>
            <person name="Goodwin L."/>
            <person name="Pitluck S."/>
            <person name="Sims D."/>
            <person name="Brettin T."/>
            <person name="Detter J.C."/>
            <person name="Han C."/>
            <person name="Larimer F."/>
            <person name="Land M."/>
            <person name="Hauser L."/>
            <person name="Kyrpides N."/>
            <person name="Mikhailova N."/>
            <person name="Hazen T.C."/>
            <person name="Richardson P."/>
        </authorList>
    </citation>
    <scope>NUCLEOTIDE SEQUENCE [LARGE SCALE GENOMIC DNA]</scope>
    <source>
        <strain>DSM 19637 / Miyazaki F</strain>
    </source>
</reference>
<protein>
    <recommendedName>
        <fullName evidence="1">DNA ligase</fullName>
        <ecNumber evidence="1">6.5.1.2</ecNumber>
    </recommendedName>
    <alternativeName>
        <fullName evidence="1">Polydeoxyribonucleotide synthase [NAD(+)]</fullName>
    </alternativeName>
</protein>
<evidence type="ECO:0000255" key="1">
    <source>
        <dbReference type="HAMAP-Rule" id="MF_01588"/>
    </source>
</evidence>
<evidence type="ECO:0000256" key="2">
    <source>
        <dbReference type="SAM" id="MobiDB-lite"/>
    </source>
</evidence>
<gene>
    <name evidence="1" type="primary">ligA</name>
    <name type="ordered locus">DvMF_0451</name>
</gene>
<proteinExistence type="inferred from homology"/>
<dbReference type="EC" id="6.5.1.2" evidence="1"/>
<dbReference type="EMBL" id="CP001197">
    <property type="protein sequence ID" value="ACL07408.1"/>
    <property type="molecule type" value="Genomic_DNA"/>
</dbReference>
<dbReference type="SMR" id="B8DJT6"/>
<dbReference type="STRING" id="883.DvMF_0451"/>
<dbReference type="KEGG" id="dvm:DvMF_0451"/>
<dbReference type="eggNOG" id="COG0272">
    <property type="taxonomic scope" value="Bacteria"/>
</dbReference>
<dbReference type="HOGENOM" id="CLU_007764_2_1_7"/>
<dbReference type="OrthoDB" id="9759736at2"/>
<dbReference type="GO" id="GO:0005829">
    <property type="term" value="C:cytosol"/>
    <property type="evidence" value="ECO:0007669"/>
    <property type="project" value="TreeGrafter"/>
</dbReference>
<dbReference type="GO" id="GO:0003677">
    <property type="term" value="F:DNA binding"/>
    <property type="evidence" value="ECO:0007669"/>
    <property type="project" value="InterPro"/>
</dbReference>
<dbReference type="GO" id="GO:0003911">
    <property type="term" value="F:DNA ligase (NAD+) activity"/>
    <property type="evidence" value="ECO:0007669"/>
    <property type="project" value="UniProtKB-UniRule"/>
</dbReference>
<dbReference type="GO" id="GO:0046872">
    <property type="term" value="F:metal ion binding"/>
    <property type="evidence" value="ECO:0007669"/>
    <property type="project" value="UniProtKB-KW"/>
</dbReference>
<dbReference type="GO" id="GO:0006281">
    <property type="term" value="P:DNA repair"/>
    <property type="evidence" value="ECO:0007669"/>
    <property type="project" value="UniProtKB-KW"/>
</dbReference>
<dbReference type="GO" id="GO:0006260">
    <property type="term" value="P:DNA replication"/>
    <property type="evidence" value="ECO:0007669"/>
    <property type="project" value="UniProtKB-KW"/>
</dbReference>
<dbReference type="CDD" id="cd17748">
    <property type="entry name" value="BRCT_DNA_ligase_like"/>
    <property type="match status" value="1"/>
</dbReference>
<dbReference type="CDD" id="cd00114">
    <property type="entry name" value="LIGANc"/>
    <property type="match status" value="1"/>
</dbReference>
<dbReference type="FunFam" id="1.10.150.20:FF:000006">
    <property type="entry name" value="DNA ligase"/>
    <property type="match status" value="1"/>
</dbReference>
<dbReference type="FunFam" id="2.40.50.140:FF:000012">
    <property type="entry name" value="DNA ligase"/>
    <property type="match status" value="1"/>
</dbReference>
<dbReference type="Gene3D" id="6.20.10.30">
    <property type="match status" value="1"/>
</dbReference>
<dbReference type="Gene3D" id="1.10.150.20">
    <property type="entry name" value="5' to 3' exonuclease, C-terminal subdomain"/>
    <property type="match status" value="2"/>
</dbReference>
<dbReference type="Gene3D" id="3.40.50.10190">
    <property type="entry name" value="BRCT domain"/>
    <property type="match status" value="1"/>
</dbReference>
<dbReference type="Gene3D" id="3.30.470.30">
    <property type="entry name" value="DNA ligase/mRNA capping enzyme"/>
    <property type="match status" value="1"/>
</dbReference>
<dbReference type="Gene3D" id="1.10.287.610">
    <property type="entry name" value="Helix hairpin bin"/>
    <property type="match status" value="1"/>
</dbReference>
<dbReference type="Gene3D" id="2.40.50.140">
    <property type="entry name" value="Nucleic acid-binding proteins"/>
    <property type="match status" value="1"/>
</dbReference>
<dbReference type="HAMAP" id="MF_01588">
    <property type="entry name" value="DNA_ligase_A"/>
    <property type="match status" value="1"/>
</dbReference>
<dbReference type="InterPro" id="IPR001357">
    <property type="entry name" value="BRCT_dom"/>
</dbReference>
<dbReference type="InterPro" id="IPR036420">
    <property type="entry name" value="BRCT_dom_sf"/>
</dbReference>
<dbReference type="InterPro" id="IPR041663">
    <property type="entry name" value="DisA/LigA_HHH"/>
</dbReference>
<dbReference type="InterPro" id="IPR001679">
    <property type="entry name" value="DNA_ligase"/>
</dbReference>
<dbReference type="InterPro" id="IPR033136">
    <property type="entry name" value="DNA_ligase_CS"/>
</dbReference>
<dbReference type="InterPro" id="IPR013839">
    <property type="entry name" value="DNAligase_adenylation"/>
</dbReference>
<dbReference type="InterPro" id="IPR013840">
    <property type="entry name" value="DNAligase_N"/>
</dbReference>
<dbReference type="InterPro" id="IPR003583">
    <property type="entry name" value="Hlx-hairpin-Hlx_DNA-bd_motif"/>
</dbReference>
<dbReference type="InterPro" id="IPR012340">
    <property type="entry name" value="NA-bd_OB-fold"/>
</dbReference>
<dbReference type="InterPro" id="IPR004150">
    <property type="entry name" value="NAD_DNA_ligase_OB"/>
</dbReference>
<dbReference type="InterPro" id="IPR010994">
    <property type="entry name" value="RuvA_2-like"/>
</dbReference>
<dbReference type="InterPro" id="IPR004149">
    <property type="entry name" value="Znf_DNAligase_C4"/>
</dbReference>
<dbReference type="NCBIfam" id="TIGR00575">
    <property type="entry name" value="dnlj"/>
    <property type="match status" value="1"/>
</dbReference>
<dbReference type="NCBIfam" id="NF005932">
    <property type="entry name" value="PRK07956.1"/>
    <property type="match status" value="1"/>
</dbReference>
<dbReference type="PANTHER" id="PTHR23389">
    <property type="entry name" value="CHROMOSOME TRANSMISSION FIDELITY FACTOR 18"/>
    <property type="match status" value="1"/>
</dbReference>
<dbReference type="PANTHER" id="PTHR23389:SF9">
    <property type="entry name" value="DNA LIGASE"/>
    <property type="match status" value="1"/>
</dbReference>
<dbReference type="Pfam" id="PF00533">
    <property type="entry name" value="BRCT"/>
    <property type="match status" value="1"/>
</dbReference>
<dbReference type="Pfam" id="PF01653">
    <property type="entry name" value="DNA_ligase_aden"/>
    <property type="match status" value="1"/>
</dbReference>
<dbReference type="Pfam" id="PF03120">
    <property type="entry name" value="DNA_ligase_OB"/>
    <property type="match status" value="1"/>
</dbReference>
<dbReference type="Pfam" id="PF03119">
    <property type="entry name" value="DNA_ligase_ZBD"/>
    <property type="match status" value="1"/>
</dbReference>
<dbReference type="Pfam" id="PF12826">
    <property type="entry name" value="HHH_2"/>
    <property type="match status" value="1"/>
</dbReference>
<dbReference type="Pfam" id="PF14520">
    <property type="entry name" value="HHH_5"/>
    <property type="match status" value="1"/>
</dbReference>
<dbReference type="Pfam" id="PF22745">
    <property type="entry name" value="Nlig-Ia"/>
    <property type="match status" value="1"/>
</dbReference>
<dbReference type="PIRSF" id="PIRSF001604">
    <property type="entry name" value="LigA"/>
    <property type="match status" value="1"/>
</dbReference>
<dbReference type="SMART" id="SM00292">
    <property type="entry name" value="BRCT"/>
    <property type="match status" value="1"/>
</dbReference>
<dbReference type="SMART" id="SM00278">
    <property type="entry name" value="HhH1"/>
    <property type="match status" value="3"/>
</dbReference>
<dbReference type="SMART" id="SM00532">
    <property type="entry name" value="LIGANc"/>
    <property type="match status" value="1"/>
</dbReference>
<dbReference type="SUPFAM" id="SSF52113">
    <property type="entry name" value="BRCT domain"/>
    <property type="match status" value="1"/>
</dbReference>
<dbReference type="SUPFAM" id="SSF56091">
    <property type="entry name" value="DNA ligase/mRNA capping enzyme, catalytic domain"/>
    <property type="match status" value="1"/>
</dbReference>
<dbReference type="SUPFAM" id="SSF50249">
    <property type="entry name" value="Nucleic acid-binding proteins"/>
    <property type="match status" value="1"/>
</dbReference>
<dbReference type="SUPFAM" id="SSF47781">
    <property type="entry name" value="RuvA domain 2-like"/>
    <property type="match status" value="1"/>
</dbReference>
<dbReference type="PROSITE" id="PS50172">
    <property type="entry name" value="BRCT"/>
    <property type="match status" value="1"/>
</dbReference>
<dbReference type="PROSITE" id="PS01056">
    <property type="entry name" value="DNA_LIGASE_N2"/>
    <property type="match status" value="1"/>
</dbReference>